<gene>
    <name evidence="1" type="primary">rnt</name>
    <name type="ordered locus">APL_0182</name>
</gene>
<evidence type="ECO:0000255" key="1">
    <source>
        <dbReference type="HAMAP-Rule" id="MF_00157"/>
    </source>
</evidence>
<reference key="1">
    <citation type="journal article" date="2008" name="J. Bacteriol.">
        <title>The complete genome sequence of Actinobacillus pleuropneumoniae L20 (serotype 5b).</title>
        <authorList>
            <person name="Foote S.J."/>
            <person name="Bosse J.T."/>
            <person name="Bouevitch A.B."/>
            <person name="Langford P.R."/>
            <person name="Young N.M."/>
            <person name="Nash J.H.E."/>
        </authorList>
    </citation>
    <scope>NUCLEOTIDE SEQUENCE [LARGE SCALE GENOMIC DNA]</scope>
    <source>
        <strain>L20</strain>
    </source>
</reference>
<sequence length="218" mass="24294">MTEQVTDYNFLKNRFRGYLPVIIDVETAGLNAQTDALLELAAITVKMDENGYLVPDQKCHFHIQPFEGANINPDSLKFNGIDIDNPLRGAVPENIAIPEMFKMVRRAMKEQGCQRAVIVAHNATFDQAFVQAAVKRINAKRDPFHPFAMFDTATLAGFMYGQTVLVKACQMAKIPFDGKQAHSALYDTEKTTELFCAMVNRLKDLGGFPLVSDSESNV</sequence>
<organism>
    <name type="scientific">Actinobacillus pleuropneumoniae serotype 5b (strain L20)</name>
    <dbReference type="NCBI Taxonomy" id="416269"/>
    <lineage>
        <taxon>Bacteria</taxon>
        <taxon>Pseudomonadati</taxon>
        <taxon>Pseudomonadota</taxon>
        <taxon>Gammaproteobacteria</taxon>
        <taxon>Pasteurellales</taxon>
        <taxon>Pasteurellaceae</taxon>
        <taxon>Actinobacillus</taxon>
    </lineage>
</organism>
<feature type="chain" id="PRO_1000011384" description="Ribonuclease T">
    <location>
        <begin position="1"/>
        <end position="218"/>
    </location>
</feature>
<feature type="domain" description="Exonuclease" evidence="1">
    <location>
        <begin position="21"/>
        <end position="195"/>
    </location>
</feature>
<feature type="active site" description="Proton donor/acceptor" evidence="1">
    <location>
        <position position="182"/>
    </location>
</feature>
<feature type="binding site" evidence="1">
    <location>
        <position position="24"/>
    </location>
    <ligand>
        <name>Mg(2+)</name>
        <dbReference type="ChEBI" id="CHEBI:18420"/>
        <label>1</label>
        <note>catalytic</note>
    </ligand>
</feature>
<feature type="binding site" evidence="1">
    <location>
        <position position="24"/>
    </location>
    <ligand>
        <name>Mg(2+)</name>
        <dbReference type="ChEBI" id="CHEBI:18420"/>
        <label>2</label>
        <note>catalytic</note>
    </ligand>
</feature>
<feature type="binding site" evidence="1">
    <location>
        <position position="26"/>
    </location>
    <ligand>
        <name>Mg(2+)</name>
        <dbReference type="ChEBI" id="CHEBI:18420"/>
        <label>2</label>
        <note>catalytic</note>
    </ligand>
</feature>
<feature type="binding site" evidence="1">
    <location>
        <position position="182"/>
    </location>
    <ligand>
        <name>Mg(2+)</name>
        <dbReference type="ChEBI" id="CHEBI:18420"/>
        <label>2</label>
        <note>catalytic</note>
    </ligand>
</feature>
<feature type="binding site" evidence="1">
    <location>
        <position position="187"/>
    </location>
    <ligand>
        <name>Mg(2+)</name>
        <dbReference type="ChEBI" id="CHEBI:18420"/>
        <label>2</label>
        <note>catalytic</note>
    </ligand>
</feature>
<feature type="site" description="Important for substrate binding and specificity" evidence="1">
    <location>
        <position position="78"/>
    </location>
</feature>
<feature type="site" description="Important for substrate binding and specificity" evidence="1">
    <location>
        <position position="125"/>
    </location>
</feature>
<feature type="site" description="Important for substrate binding and specificity" evidence="1">
    <location>
        <position position="147"/>
    </location>
</feature>
<name>RNT_ACTP2</name>
<keyword id="KW-0269">Exonuclease</keyword>
<keyword id="KW-0378">Hydrolase</keyword>
<keyword id="KW-0460">Magnesium</keyword>
<keyword id="KW-0479">Metal-binding</keyword>
<keyword id="KW-0540">Nuclease</keyword>
<keyword id="KW-1185">Reference proteome</keyword>
<keyword id="KW-0819">tRNA processing</keyword>
<comment type="function">
    <text evidence="1">Trims short 3' overhangs of a variety of RNA species, leaving a one or two nucleotide 3' overhang. Responsible for the end-turnover of tRNA: specifically removes the terminal AMP residue from uncharged tRNA (tRNA-C-C-A). Also appears to be involved in tRNA biosynthesis.</text>
</comment>
<comment type="cofactor">
    <cofactor evidence="1">
        <name>Mg(2+)</name>
        <dbReference type="ChEBI" id="CHEBI:18420"/>
    </cofactor>
    <text evidence="1">Binds two Mg(2+) per subunit. The active form of the enzyme binds two Mg(2+) ions in its active site. The first Mg(2+) forms only one salt bridge with the protein.</text>
</comment>
<comment type="subunit">
    <text evidence="1">Homodimer.</text>
</comment>
<comment type="similarity">
    <text evidence="1">Belongs to the RNase T family.</text>
</comment>
<dbReference type="EC" id="3.1.13.-" evidence="1"/>
<dbReference type="EMBL" id="CP000569">
    <property type="protein sequence ID" value="ABN73290.1"/>
    <property type="molecule type" value="Genomic_DNA"/>
</dbReference>
<dbReference type="RefSeq" id="WP_005606905.1">
    <property type="nucleotide sequence ID" value="NC_009053.1"/>
</dbReference>
<dbReference type="SMR" id="A3MYQ4"/>
<dbReference type="STRING" id="416269.APL_0182"/>
<dbReference type="EnsemblBacteria" id="ABN73290">
    <property type="protein sequence ID" value="ABN73290"/>
    <property type="gene ID" value="APL_0182"/>
</dbReference>
<dbReference type="KEGG" id="apl:APL_0182"/>
<dbReference type="eggNOG" id="COG0847">
    <property type="taxonomic scope" value="Bacteria"/>
</dbReference>
<dbReference type="HOGENOM" id="CLU_082724_0_0_6"/>
<dbReference type="Proteomes" id="UP000001432">
    <property type="component" value="Chromosome"/>
</dbReference>
<dbReference type="GO" id="GO:0005829">
    <property type="term" value="C:cytosol"/>
    <property type="evidence" value="ECO:0007669"/>
    <property type="project" value="TreeGrafter"/>
</dbReference>
<dbReference type="GO" id="GO:0008408">
    <property type="term" value="F:3'-5' exonuclease activity"/>
    <property type="evidence" value="ECO:0007669"/>
    <property type="project" value="TreeGrafter"/>
</dbReference>
<dbReference type="GO" id="GO:0000287">
    <property type="term" value="F:magnesium ion binding"/>
    <property type="evidence" value="ECO:0007669"/>
    <property type="project" value="UniProtKB-UniRule"/>
</dbReference>
<dbReference type="GO" id="GO:0003676">
    <property type="term" value="F:nucleic acid binding"/>
    <property type="evidence" value="ECO:0007669"/>
    <property type="project" value="InterPro"/>
</dbReference>
<dbReference type="GO" id="GO:0016896">
    <property type="term" value="F:RNA exonuclease activity, producing 5'-phosphomonoesters"/>
    <property type="evidence" value="ECO:0007669"/>
    <property type="project" value="UniProtKB-UniRule"/>
</dbReference>
<dbReference type="GO" id="GO:0045004">
    <property type="term" value="P:DNA replication proofreading"/>
    <property type="evidence" value="ECO:0007669"/>
    <property type="project" value="TreeGrafter"/>
</dbReference>
<dbReference type="GO" id="GO:0008033">
    <property type="term" value="P:tRNA processing"/>
    <property type="evidence" value="ECO:0007669"/>
    <property type="project" value="UniProtKB-KW"/>
</dbReference>
<dbReference type="FunFam" id="3.30.420.10:FF:000009">
    <property type="entry name" value="Ribonuclease T"/>
    <property type="match status" value="1"/>
</dbReference>
<dbReference type="Gene3D" id="3.30.420.10">
    <property type="entry name" value="Ribonuclease H-like superfamily/Ribonuclease H"/>
    <property type="match status" value="1"/>
</dbReference>
<dbReference type="HAMAP" id="MF_00157">
    <property type="entry name" value="RNase_T"/>
    <property type="match status" value="1"/>
</dbReference>
<dbReference type="InterPro" id="IPR013520">
    <property type="entry name" value="Exonuclease_RNaseT/DNA_pol3"/>
</dbReference>
<dbReference type="InterPro" id="IPR005987">
    <property type="entry name" value="RNase_T"/>
</dbReference>
<dbReference type="InterPro" id="IPR012337">
    <property type="entry name" value="RNaseH-like_sf"/>
</dbReference>
<dbReference type="InterPro" id="IPR036397">
    <property type="entry name" value="RNaseH_sf"/>
</dbReference>
<dbReference type="NCBIfam" id="TIGR01298">
    <property type="entry name" value="RNaseT"/>
    <property type="match status" value="1"/>
</dbReference>
<dbReference type="PANTHER" id="PTHR30231">
    <property type="entry name" value="DNA POLYMERASE III SUBUNIT EPSILON"/>
    <property type="match status" value="1"/>
</dbReference>
<dbReference type="PANTHER" id="PTHR30231:SF2">
    <property type="entry name" value="RIBONUCLEASE T"/>
    <property type="match status" value="1"/>
</dbReference>
<dbReference type="Pfam" id="PF00929">
    <property type="entry name" value="RNase_T"/>
    <property type="match status" value="1"/>
</dbReference>
<dbReference type="SMART" id="SM00479">
    <property type="entry name" value="EXOIII"/>
    <property type="match status" value="1"/>
</dbReference>
<dbReference type="SUPFAM" id="SSF53098">
    <property type="entry name" value="Ribonuclease H-like"/>
    <property type="match status" value="1"/>
</dbReference>
<accession>A3MYQ4</accession>
<protein>
    <recommendedName>
        <fullName evidence="1">Ribonuclease T</fullName>
        <ecNumber evidence="1">3.1.13.-</ecNumber>
    </recommendedName>
    <alternativeName>
        <fullName evidence="1">Exoribonuclease T</fullName>
        <shortName evidence="1">RNase T</shortName>
    </alternativeName>
</protein>
<proteinExistence type="inferred from homology"/>